<organism>
    <name type="scientific">Rickettsia typhi (strain ATCC VR-144 / Wilmington)</name>
    <dbReference type="NCBI Taxonomy" id="257363"/>
    <lineage>
        <taxon>Bacteria</taxon>
        <taxon>Pseudomonadati</taxon>
        <taxon>Pseudomonadota</taxon>
        <taxon>Alphaproteobacteria</taxon>
        <taxon>Rickettsiales</taxon>
        <taxon>Rickettsiaceae</taxon>
        <taxon>Rickettsieae</taxon>
        <taxon>Rickettsia</taxon>
        <taxon>typhus group</taxon>
    </lineage>
</organism>
<accession>Q68WS3</accession>
<comment type="similarity">
    <text evidence="1">Belongs to the bacterial ribosomal protein bL36 family.</text>
</comment>
<protein>
    <recommendedName>
        <fullName evidence="1">Large ribosomal subunit protein bL36</fullName>
    </recommendedName>
    <alternativeName>
        <fullName evidence="2">50S ribosomal protein L36</fullName>
    </alternativeName>
</protein>
<gene>
    <name evidence="1" type="primary">rpmJ</name>
    <name type="ordered locus">RT0443</name>
</gene>
<proteinExistence type="inferred from homology"/>
<sequence length="41" mass="4861">MKVVSSLKSLKKRDKDCQIVKRRGKIFVINKKNKRFRAKQG</sequence>
<evidence type="ECO:0000255" key="1">
    <source>
        <dbReference type="HAMAP-Rule" id="MF_00251"/>
    </source>
</evidence>
<evidence type="ECO:0000305" key="2"/>
<feature type="chain" id="PRO_0000126250" description="Large ribosomal subunit protein bL36">
    <location>
        <begin position="1"/>
        <end position="41"/>
    </location>
</feature>
<keyword id="KW-0687">Ribonucleoprotein</keyword>
<keyword id="KW-0689">Ribosomal protein</keyword>
<name>RL36_RICTY</name>
<reference key="1">
    <citation type="journal article" date="2004" name="J. Bacteriol.">
        <title>Complete genome sequence of Rickettsia typhi and comparison with sequences of other Rickettsiae.</title>
        <authorList>
            <person name="McLeod M.P."/>
            <person name="Qin X."/>
            <person name="Karpathy S.E."/>
            <person name="Gioia J."/>
            <person name="Highlander S.K."/>
            <person name="Fox G.E."/>
            <person name="McNeill T.Z."/>
            <person name="Jiang H."/>
            <person name="Muzny D."/>
            <person name="Jacob L.S."/>
            <person name="Hawes A.C."/>
            <person name="Sodergren E."/>
            <person name="Gill R."/>
            <person name="Hume J."/>
            <person name="Morgan M."/>
            <person name="Fan G."/>
            <person name="Amin A.G."/>
            <person name="Gibbs R.A."/>
            <person name="Hong C."/>
            <person name="Yu X.-J."/>
            <person name="Walker D.H."/>
            <person name="Weinstock G.M."/>
        </authorList>
    </citation>
    <scope>NUCLEOTIDE SEQUENCE [LARGE SCALE GENOMIC DNA]</scope>
    <source>
        <strain>ATCC VR-144 / Wilmington</strain>
    </source>
</reference>
<dbReference type="EMBL" id="AE017197">
    <property type="protein sequence ID" value="AAU03919.1"/>
    <property type="molecule type" value="Genomic_DNA"/>
</dbReference>
<dbReference type="SMR" id="Q68WS3"/>
<dbReference type="KEGG" id="rty:RT0443"/>
<dbReference type="eggNOG" id="COG0257">
    <property type="taxonomic scope" value="Bacteria"/>
</dbReference>
<dbReference type="HOGENOM" id="CLU_135723_3_2_5"/>
<dbReference type="Proteomes" id="UP000000604">
    <property type="component" value="Chromosome"/>
</dbReference>
<dbReference type="GO" id="GO:1990904">
    <property type="term" value="C:ribonucleoprotein complex"/>
    <property type="evidence" value="ECO:0007669"/>
    <property type="project" value="UniProtKB-KW"/>
</dbReference>
<dbReference type="GO" id="GO:0005840">
    <property type="term" value="C:ribosome"/>
    <property type="evidence" value="ECO:0007669"/>
    <property type="project" value="UniProtKB-KW"/>
</dbReference>
<dbReference type="GO" id="GO:0003735">
    <property type="term" value="F:structural constituent of ribosome"/>
    <property type="evidence" value="ECO:0007669"/>
    <property type="project" value="InterPro"/>
</dbReference>
<dbReference type="GO" id="GO:0006412">
    <property type="term" value="P:translation"/>
    <property type="evidence" value="ECO:0007669"/>
    <property type="project" value="UniProtKB-UniRule"/>
</dbReference>
<dbReference type="HAMAP" id="MF_00251">
    <property type="entry name" value="Ribosomal_bL36"/>
    <property type="match status" value="1"/>
</dbReference>
<dbReference type="InterPro" id="IPR000473">
    <property type="entry name" value="Ribosomal_bL36"/>
</dbReference>
<dbReference type="InterPro" id="IPR035977">
    <property type="entry name" value="Ribosomal_bL36_sp"/>
</dbReference>
<dbReference type="InterPro" id="IPR047621">
    <property type="entry name" value="Ribosomal_L36_bact"/>
</dbReference>
<dbReference type="NCBIfam" id="NF002021">
    <property type="entry name" value="PRK00831.1"/>
    <property type="match status" value="1"/>
</dbReference>
<dbReference type="PANTHER" id="PTHR47781">
    <property type="entry name" value="50S RIBOSOMAL PROTEIN L36 2"/>
    <property type="match status" value="1"/>
</dbReference>
<dbReference type="PANTHER" id="PTHR47781:SF1">
    <property type="entry name" value="LARGE RIBOSOMAL SUBUNIT PROTEIN BL36B"/>
    <property type="match status" value="1"/>
</dbReference>
<dbReference type="Pfam" id="PF00444">
    <property type="entry name" value="Ribosomal_L36"/>
    <property type="match status" value="1"/>
</dbReference>
<dbReference type="SUPFAM" id="SSF57840">
    <property type="entry name" value="Ribosomal protein L36"/>
    <property type="match status" value="1"/>
</dbReference>
<dbReference type="PROSITE" id="PS00828">
    <property type="entry name" value="RIBOSOMAL_L36"/>
    <property type="match status" value="1"/>
</dbReference>